<feature type="chain" id="PRO_0000136875" description="Large ribosomal subunit protein eL24">
    <location>
        <begin position="1"/>
        <end position="154"/>
    </location>
</feature>
<feature type="region of interest" description="Disordered" evidence="1">
    <location>
        <begin position="92"/>
        <end position="154"/>
    </location>
</feature>
<feature type="compositionally biased region" description="Basic and acidic residues" evidence="1">
    <location>
        <begin position="96"/>
        <end position="122"/>
    </location>
</feature>
<feature type="compositionally biased region" description="Low complexity" evidence="1">
    <location>
        <begin position="129"/>
        <end position="154"/>
    </location>
</feature>
<reference key="1">
    <citation type="submission" date="2002-09" db="EMBL/GenBank/DDBJ databases">
        <title>Cloning of ribosomal protein L24 of amphioxus.</title>
        <authorList>
            <person name="Chen Z.K."/>
            <person name="Zhang H.W."/>
            <person name="Yang H.M."/>
        </authorList>
    </citation>
    <scope>NUCLEOTIDE SEQUENCE [MRNA]</scope>
</reference>
<accession>Q8ISQ3</accession>
<gene>
    <name type="primary">RPL24</name>
</gene>
<comment type="similarity">
    <text evidence="2">Belongs to the eukaryotic ribosomal protein eL24 family.</text>
</comment>
<protein>
    <recommendedName>
        <fullName evidence="2">Large ribosomal subunit protein eL24</fullName>
    </recommendedName>
    <alternativeName>
        <fullName>60S ribosomal protein L24</fullName>
    </alternativeName>
</protein>
<keyword id="KW-1185">Reference proteome</keyword>
<keyword id="KW-0687">Ribonucleoprotein</keyword>
<keyword id="KW-0689">Ribosomal protein</keyword>
<dbReference type="EMBL" id="AF548322">
    <property type="protein sequence ID" value="AAN52377.1"/>
    <property type="molecule type" value="mRNA"/>
</dbReference>
<dbReference type="SMR" id="Q8ISQ3"/>
<dbReference type="Proteomes" id="UP000515135">
    <property type="component" value="Unplaced"/>
</dbReference>
<dbReference type="GO" id="GO:0022625">
    <property type="term" value="C:cytosolic large ribosomal subunit"/>
    <property type="evidence" value="ECO:0007669"/>
    <property type="project" value="TreeGrafter"/>
</dbReference>
<dbReference type="GO" id="GO:0003729">
    <property type="term" value="F:mRNA binding"/>
    <property type="evidence" value="ECO:0007669"/>
    <property type="project" value="TreeGrafter"/>
</dbReference>
<dbReference type="GO" id="GO:0003735">
    <property type="term" value="F:structural constituent of ribosome"/>
    <property type="evidence" value="ECO:0007669"/>
    <property type="project" value="InterPro"/>
</dbReference>
<dbReference type="GO" id="GO:0002181">
    <property type="term" value="P:cytoplasmic translation"/>
    <property type="evidence" value="ECO:0007669"/>
    <property type="project" value="TreeGrafter"/>
</dbReference>
<dbReference type="CDD" id="cd00472">
    <property type="entry name" value="Ribosomal_L24e_L24"/>
    <property type="match status" value="1"/>
</dbReference>
<dbReference type="FunFam" id="2.30.170.20:FF:000002">
    <property type="entry name" value="60S ribosomal protein L24"/>
    <property type="match status" value="1"/>
</dbReference>
<dbReference type="Gene3D" id="6.10.250.1270">
    <property type="match status" value="1"/>
</dbReference>
<dbReference type="Gene3D" id="2.30.170.20">
    <property type="entry name" value="Ribosomal protein L24e"/>
    <property type="match status" value="1"/>
</dbReference>
<dbReference type="InterPro" id="IPR038630">
    <property type="entry name" value="L24e/L24_sf"/>
</dbReference>
<dbReference type="InterPro" id="IPR056366">
    <property type="entry name" value="Ribosomal_eL24"/>
</dbReference>
<dbReference type="InterPro" id="IPR000988">
    <property type="entry name" value="Ribosomal_eL24-rel_N"/>
</dbReference>
<dbReference type="InterPro" id="IPR023442">
    <property type="entry name" value="Ribosomal_eL24_CS"/>
</dbReference>
<dbReference type="InterPro" id="IPR011017">
    <property type="entry name" value="TRASH_dom"/>
</dbReference>
<dbReference type="PANTHER" id="PTHR10792">
    <property type="entry name" value="60S RIBOSOMAL PROTEIN L24"/>
    <property type="match status" value="1"/>
</dbReference>
<dbReference type="PANTHER" id="PTHR10792:SF1">
    <property type="entry name" value="RIBOSOMAL PROTEIN L24"/>
    <property type="match status" value="1"/>
</dbReference>
<dbReference type="Pfam" id="PF01246">
    <property type="entry name" value="Ribosomal_L24e"/>
    <property type="match status" value="1"/>
</dbReference>
<dbReference type="SMART" id="SM00746">
    <property type="entry name" value="TRASH"/>
    <property type="match status" value="1"/>
</dbReference>
<dbReference type="SUPFAM" id="SSF57716">
    <property type="entry name" value="Glucocorticoid receptor-like (DNA-binding domain)"/>
    <property type="match status" value="1"/>
</dbReference>
<dbReference type="PROSITE" id="PS01073">
    <property type="entry name" value="RIBOSOMAL_L24E"/>
    <property type="match status" value="1"/>
</dbReference>
<evidence type="ECO:0000256" key="1">
    <source>
        <dbReference type="SAM" id="MobiDB-lite"/>
    </source>
</evidence>
<evidence type="ECO:0000305" key="2"/>
<sequence length="154" mass="17628">MKIELCLYSGYKIYPGHGKRYARTDGRVYTFLNAKCEASFLMKRNPREITWTVLYRRKHKKGQQEEIQKKRSRRTAKFQRAITGASLTEIMAKRNQKPEVRKAQREQAVKAAKEKKKADQVGKRKAPAKARATAPKTKAPKTVKAAAPRVGGKR</sequence>
<proteinExistence type="evidence at transcript level"/>
<organism>
    <name type="scientific">Branchiostoma belcheri</name>
    <name type="common">Amphioxus</name>
    <dbReference type="NCBI Taxonomy" id="7741"/>
    <lineage>
        <taxon>Eukaryota</taxon>
        <taxon>Metazoa</taxon>
        <taxon>Chordata</taxon>
        <taxon>Cephalochordata</taxon>
        <taxon>Leptocardii</taxon>
        <taxon>Amphioxiformes</taxon>
        <taxon>Branchiostomatidae</taxon>
        <taxon>Branchiostoma</taxon>
    </lineage>
</organism>
<name>RL24_BRABE</name>